<reference key="1">
    <citation type="journal article" date="1993" name="J. Bacteriol.">
        <title>Cloning, sequencing, and transcriptional analysis of the gene coding for the vegetative sigma factor of Agrobacterium tumefaciens.</title>
        <authorList>
            <person name="Segal G."/>
            <person name="Ron E.Z."/>
        </authorList>
    </citation>
    <scope>NUCLEOTIDE SEQUENCE [GENOMIC DNA]</scope>
</reference>
<reference key="2">
    <citation type="journal article" date="2001" name="Science">
        <title>The genome of the natural genetic engineer Agrobacterium tumefaciens C58.</title>
        <authorList>
            <person name="Wood D.W."/>
            <person name="Setubal J.C."/>
            <person name="Kaul R."/>
            <person name="Monks D.E."/>
            <person name="Kitajima J.P."/>
            <person name="Okura V.K."/>
            <person name="Zhou Y."/>
            <person name="Chen L."/>
            <person name="Wood G.E."/>
            <person name="Almeida N.F. Jr."/>
            <person name="Woo L."/>
            <person name="Chen Y."/>
            <person name="Paulsen I.T."/>
            <person name="Eisen J.A."/>
            <person name="Karp P.D."/>
            <person name="Bovee D. Sr."/>
            <person name="Chapman P."/>
            <person name="Clendenning J."/>
            <person name="Deatherage G."/>
            <person name="Gillet W."/>
            <person name="Grant C."/>
            <person name="Kutyavin T."/>
            <person name="Levy R."/>
            <person name="Li M.-J."/>
            <person name="McClelland E."/>
            <person name="Palmieri A."/>
            <person name="Raymond C."/>
            <person name="Rouse G."/>
            <person name="Saenphimmachak C."/>
            <person name="Wu Z."/>
            <person name="Romero P."/>
            <person name="Gordon D."/>
            <person name="Zhang S."/>
            <person name="Yoo H."/>
            <person name="Tao Y."/>
            <person name="Biddle P."/>
            <person name="Jung M."/>
            <person name="Krespan W."/>
            <person name="Perry M."/>
            <person name="Gordon-Kamm B."/>
            <person name="Liao L."/>
            <person name="Kim S."/>
            <person name="Hendrick C."/>
            <person name="Zhao Z.-Y."/>
            <person name="Dolan M."/>
            <person name="Chumley F."/>
            <person name="Tingey S.V."/>
            <person name="Tomb J.-F."/>
            <person name="Gordon M.P."/>
            <person name="Olson M.V."/>
            <person name="Nester E.W."/>
        </authorList>
    </citation>
    <scope>NUCLEOTIDE SEQUENCE [LARGE SCALE GENOMIC DNA]</scope>
    <source>
        <strain>C58 / ATCC 33970</strain>
    </source>
</reference>
<reference key="3">
    <citation type="journal article" date="2001" name="Science">
        <title>Genome sequence of the plant pathogen and biotechnology agent Agrobacterium tumefaciens C58.</title>
        <authorList>
            <person name="Goodner B."/>
            <person name="Hinkle G."/>
            <person name="Gattung S."/>
            <person name="Miller N."/>
            <person name="Blanchard M."/>
            <person name="Qurollo B."/>
            <person name="Goldman B.S."/>
            <person name="Cao Y."/>
            <person name="Askenazi M."/>
            <person name="Halling C."/>
            <person name="Mullin L."/>
            <person name="Houmiel K."/>
            <person name="Gordon J."/>
            <person name="Vaudin M."/>
            <person name="Iartchouk O."/>
            <person name="Epp A."/>
            <person name="Liu F."/>
            <person name="Wollam C."/>
            <person name="Allinger M."/>
            <person name="Doughty D."/>
            <person name="Scott C."/>
            <person name="Lappas C."/>
            <person name="Markelz B."/>
            <person name="Flanagan C."/>
            <person name="Crowell C."/>
            <person name="Gurson J."/>
            <person name="Lomo C."/>
            <person name="Sear C."/>
            <person name="Strub G."/>
            <person name="Cielo C."/>
            <person name="Slater S."/>
        </authorList>
    </citation>
    <scope>NUCLEOTIDE SEQUENCE [LARGE SCALE GENOMIC DNA]</scope>
    <source>
        <strain>C58 / ATCC 33970</strain>
    </source>
</reference>
<organism>
    <name type="scientific">Agrobacterium fabrum (strain C58 / ATCC 33970)</name>
    <name type="common">Agrobacterium tumefaciens (strain C58)</name>
    <dbReference type="NCBI Taxonomy" id="176299"/>
    <lineage>
        <taxon>Bacteria</taxon>
        <taxon>Pseudomonadati</taxon>
        <taxon>Pseudomonadota</taxon>
        <taxon>Alphaproteobacteria</taxon>
        <taxon>Hyphomicrobiales</taxon>
        <taxon>Rhizobiaceae</taxon>
        <taxon>Rhizobium/Agrobacterium group</taxon>
        <taxon>Agrobacterium</taxon>
        <taxon>Agrobacterium tumefaciens complex</taxon>
    </lineage>
</organism>
<name>RPOD_AGRFC</name>
<protein>
    <recommendedName>
        <fullName evidence="1">RNA polymerase sigma factor RpoD</fullName>
    </recommendedName>
    <alternativeName>
        <fullName>Major vegetative sigma factor</fullName>
    </alternativeName>
    <alternativeName>
        <fullName evidence="1">Sigma-70</fullName>
    </alternativeName>
</protein>
<keyword id="KW-0963">Cytoplasm</keyword>
<keyword id="KW-0238">DNA-binding</keyword>
<keyword id="KW-1185">Reference proteome</keyword>
<keyword id="KW-0731">Sigma factor</keyword>
<keyword id="KW-0804">Transcription</keyword>
<keyword id="KW-0805">Transcription regulation</keyword>
<accession>P33452</accession>
<dbReference type="EMBL" id="X69388">
    <property type="protein sequence ID" value="CAA49185.1"/>
    <property type="molecule type" value="Genomic_DNA"/>
</dbReference>
<dbReference type="EMBL" id="AE007869">
    <property type="protein sequence ID" value="AAK87912.1"/>
    <property type="molecule type" value="Genomic_DNA"/>
</dbReference>
<dbReference type="PIR" id="A36913">
    <property type="entry name" value="RNAGVS"/>
</dbReference>
<dbReference type="PIR" id="AF2842">
    <property type="entry name" value="AF2842"/>
</dbReference>
<dbReference type="PIR" id="G97619">
    <property type="entry name" value="G97619"/>
</dbReference>
<dbReference type="RefSeq" id="NP_355127.1">
    <property type="nucleotide sequence ID" value="NC_003062.2"/>
</dbReference>
<dbReference type="RefSeq" id="WP_010972109.1">
    <property type="nucleotide sequence ID" value="NC_003062.2"/>
</dbReference>
<dbReference type="SMR" id="P33452"/>
<dbReference type="STRING" id="176299.Atu2167"/>
<dbReference type="EnsemblBacteria" id="AAK87912">
    <property type="protein sequence ID" value="AAK87912"/>
    <property type="gene ID" value="Atu2167"/>
</dbReference>
<dbReference type="GeneID" id="1134205"/>
<dbReference type="KEGG" id="atu:Atu2167"/>
<dbReference type="PATRIC" id="fig|176299.10.peg.2177"/>
<dbReference type="eggNOG" id="COG0568">
    <property type="taxonomic scope" value="Bacteria"/>
</dbReference>
<dbReference type="HOGENOM" id="CLU_014793_7_1_5"/>
<dbReference type="OrthoDB" id="9809557at2"/>
<dbReference type="PhylomeDB" id="P33452"/>
<dbReference type="BioCyc" id="AGRO:ATU2167-MONOMER"/>
<dbReference type="Proteomes" id="UP000000813">
    <property type="component" value="Chromosome circular"/>
</dbReference>
<dbReference type="GO" id="GO:0005737">
    <property type="term" value="C:cytoplasm"/>
    <property type="evidence" value="ECO:0007669"/>
    <property type="project" value="UniProtKB-SubCell"/>
</dbReference>
<dbReference type="GO" id="GO:0003677">
    <property type="term" value="F:DNA binding"/>
    <property type="evidence" value="ECO:0007669"/>
    <property type="project" value="UniProtKB-UniRule"/>
</dbReference>
<dbReference type="GO" id="GO:0016987">
    <property type="term" value="F:sigma factor activity"/>
    <property type="evidence" value="ECO:0007669"/>
    <property type="project" value="UniProtKB-UniRule"/>
</dbReference>
<dbReference type="GO" id="GO:0006352">
    <property type="term" value="P:DNA-templated transcription initiation"/>
    <property type="evidence" value="ECO:0007669"/>
    <property type="project" value="UniProtKB-UniRule"/>
</dbReference>
<dbReference type="CDD" id="cd06171">
    <property type="entry name" value="Sigma70_r4"/>
    <property type="match status" value="1"/>
</dbReference>
<dbReference type="FunFam" id="1.10.10.10:FF:000002">
    <property type="entry name" value="RNA polymerase sigma factor SigA"/>
    <property type="match status" value="1"/>
</dbReference>
<dbReference type="FunFam" id="1.10.10.10:FF:000004">
    <property type="entry name" value="RNA polymerase sigma factor SigA"/>
    <property type="match status" value="1"/>
</dbReference>
<dbReference type="FunFam" id="1.10.601.10:FF:000001">
    <property type="entry name" value="RNA polymerase sigma factor SigA"/>
    <property type="match status" value="1"/>
</dbReference>
<dbReference type="Gene3D" id="1.10.601.10">
    <property type="entry name" value="RNA Polymerase Primary Sigma Factor"/>
    <property type="match status" value="1"/>
</dbReference>
<dbReference type="Gene3D" id="1.10.220.120">
    <property type="entry name" value="Sigma-70 factor, region 1.1"/>
    <property type="match status" value="1"/>
</dbReference>
<dbReference type="Gene3D" id="1.10.10.10">
    <property type="entry name" value="Winged helix-like DNA-binding domain superfamily/Winged helix DNA-binding domain"/>
    <property type="match status" value="2"/>
</dbReference>
<dbReference type="HAMAP" id="MF_00963">
    <property type="entry name" value="Sigma70_RpoD_SigA"/>
    <property type="match status" value="1"/>
</dbReference>
<dbReference type="InterPro" id="IPR014284">
    <property type="entry name" value="RNA_pol_sigma-70_dom"/>
</dbReference>
<dbReference type="InterPro" id="IPR000943">
    <property type="entry name" value="RNA_pol_sigma70"/>
</dbReference>
<dbReference type="InterPro" id="IPR009042">
    <property type="entry name" value="RNA_pol_sigma70_r1_2"/>
</dbReference>
<dbReference type="InterPro" id="IPR007627">
    <property type="entry name" value="RNA_pol_sigma70_r2"/>
</dbReference>
<dbReference type="InterPro" id="IPR007624">
    <property type="entry name" value="RNA_pol_sigma70_r3"/>
</dbReference>
<dbReference type="InterPro" id="IPR007630">
    <property type="entry name" value="RNA_pol_sigma70_r4"/>
</dbReference>
<dbReference type="InterPro" id="IPR007631">
    <property type="entry name" value="RNA_pol_sigma_70_non-ess"/>
</dbReference>
<dbReference type="InterPro" id="IPR007127">
    <property type="entry name" value="RNA_pol_sigma_70_r1_1"/>
</dbReference>
<dbReference type="InterPro" id="IPR042189">
    <property type="entry name" value="RNA_pol_sigma_70_r1_1_sf"/>
</dbReference>
<dbReference type="InterPro" id="IPR013325">
    <property type="entry name" value="RNA_pol_sigma_r2"/>
</dbReference>
<dbReference type="InterPro" id="IPR013324">
    <property type="entry name" value="RNA_pol_sigma_r3/r4-like"/>
</dbReference>
<dbReference type="InterPro" id="IPR012760">
    <property type="entry name" value="RNA_pol_sigma_RpoD_C"/>
</dbReference>
<dbReference type="InterPro" id="IPR050239">
    <property type="entry name" value="Sigma-70_RNA_pol_init_factors"/>
</dbReference>
<dbReference type="InterPro" id="IPR028630">
    <property type="entry name" value="Sigma70_RpoD"/>
</dbReference>
<dbReference type="InterPro" id="IPR036388">
    <property type="entry name" value="WH-like_DNA-bd_sf"/>
</dbReference>
<dbReference type="NCBIfam" id="NF004208">
    <property type="entry name" value="PRK05658.1"/>
    <property type="match status" value="1"/>
</dbReference>
<dbReference type="NCBIfam" id="TIGR02393">
    <property type="entry name" value="RpoD_Cterm"/>
    <property type="match status" value="1"/>
</dbReference>
<dbReference type="NCBIfam" id="TIGR02937">
    <property type="entry name" value="sigma70-ECF"/>
    <property type="match status" value="1"/>
</dbReference>
<dbReference type="PANTHER" id="PTHR30603">
    <property type="entry name" value="RNA POLYMERASE SIGMA FACTOR RPO"/>
    <property type="match status" value="1"/>
</dbReference>
<dbReference type="PANTHER" id="PTHR30603:SF60">
    <property type="entry name" value="RNA POLYMERASE SIGMA FACTOR RPOD"/>
    <property type="match status" value="1"/>
</dbReference>
<dbReference type="Pfam" id="PF04546">
    <property type="entry name" value="Sigma70_ner"/>
    <property type="match status" value="1"/>
</dbReference>
<dbReference type="Pfam" id="PF03979">
    <property type="entry name" value="Sigma70_r1_1"/>
    <property type="match status" value="1"/>
</dbReference>
<dbReference type="Pfam" id="PF00140">
    <property type="entry name" value="Sigma70_r1_2"/>
    <property type="match status" value="1"/>
</dbReference>
<dbReference type="Pfam" id="PF04542">
    <property type="entry name" value="Sigma70_r2"/>
    <property type="match status" value="1"/>
</dbReference>
<dbReference type="Pfam" id="PF04539">
    <property type="entry name" value="Sigma70_r3"/>
    <property type="match status" value="1"/>
</dbReference>
<dbReference type="Pfam" id="PF04545">
    <property type="entry name" value="Sigma70_r4"/>
    <property type="match status" value="1"/>
</dbReference>
<dbReference type="PRINTS" id="PR00046">
    <property type="entry name" value="SIGMA70FCT"/>
</dbReference>
<dbReference type="SUPFAM" id="SSF88946">
    <property type="entry name" value="Sigma2 domain of RNA polymerase sigma factors"/>
    <property type="match status" value="1"/>
</dbReference>
<dbReference type="SUPFAM" id="SSF88659">
    <property type="entry name" value="Sigma3 and sigma4 domains of RNA polymerase sigma factors"/>
    <property type="match status" value="2"/>
</dbReference>
<dbReference type="PROSITE" id="PS00715">
    <property type="entry name" value="SIGMA70_1"/>
    <property type="match status" value="1"/>
</dbReference>
<dbReference type="PROSITE" id="PS00716">
    <property type="entry name" value="SIGMA70_2"/>
    <property type="match status" value="1"/>
</dbReference>
<gene>
    <name evidence="1" type="primary">rpoD</name>
    <name type="synonym">sigA</name>
    <name type="ordered locus">Atu2167</name>
    <name type="ORF">AGR_C_3929</name>
</gene>
<comment type="function">
    <text evidence="1">Sigma factors are initiation factors that promote the attachment of RNA polymerase to specific initiation sites and are then released. This sigma factor is the primary sigma factor during exponential growth.</text>
</comment>
<comment type="subunit">
    <text evidence="1">Interacts transiently with the RNA polymerase catalytic core.</text>
</comment>
<comment type="subcellular location">
    <subcellularLocation>
        <location evidence="1">Cytoplasm</location>
    </subcellularLocation>
</comment>
<comment type="similarity">
    <text evidence="1">Belongs to the sigma-70 factor family. RpoD/SigA subfamily.</text>
</comment>
<sequence length="684" mass="77399">MATKVKENEEAENERDGATDGPLLDLSDDAVKKMIKAAKKRGYVTMDELNSVLPSEEVTSEQIEDTMAMLSDMGINVIEDEDAEEAAPAEDDGDSDNEESEGGELAPSGGTALATAKKKEPTDRTDDPVRMYLREMGSVELLSREGEIAIAKRIEAGRETMISGLCESPLTFQALIIWRDELNEGTTLLREIIDLETTYSGPEAKAAPQFQSPEKIEADRKAAEEKEKTRRLRAPTGDEDVTDVGGDGLPPEEEEEDDDESNLSLAAMEAELRPQVMETLDTIADTYKKLRKLQDQQVEARLACTGTLSSGQERRYKELKDQLITAVKSLSLNQNRIDSLVEQLYDISKRLMQNEGRLLRLAESYGVKRDSFLEQYHGAELDPNWMKSITNLAARGWKEFAREESNTIREIRQEIQNLSTETGISIAEFRRIVSMVQKGEREARIAKKEMVEANLRLVISIAKKYTNRGLQFLDLIQEGNIGLMKAVDKFEYRRGYKFSTYATWWIRQAITRSIADQARTIRIPVHMIETINKIVRTSRQMLHEIGREPTPEELAEKLAMPLEKVRKVLKIAKEPISLETPVGDEEDSHLGDFIEDKNALLPIDAAIQANLRETTTRVLASLTPREERVLRMRFGIGMNTDHTLEEVGQQFSVTRERIRQIEAKALRKLKHPSRSRKLRSFLDS</sequence>
<evidence type="ECO:0000255" key="1">
    <source>
        <dbReference type="HAMAP-Rule" id="MF_00963"/>
    </source>
</evidence>
<evidence type="ECO:0000256" key="2">
    <source>
        <dbReference type="SAM" id="MobiDB-lite"/>
    </source>
</evidence>
<evidence type="ECO:0000305" key="3"/>
<feature type="chain" id="PRO_0000093871" description="RNA polymerase sigma factor RpoD">
    <location>
        <begin position="1"/>
        <end position="684"/>
    </location>
</feature>
<feature type="DNA-binding region" description="H-T-H motif" evidence="1">
    <location>
        <begin position="644"/>
        <end position="663"/>
    </location>
</feature>
<feature type="region of interest" description="Disordered" evidence="2">
    <location>
        <begin position="1"/>
        <end position="25"/>
    </location>
</feature>
<feature type="region of interest" description="Disordered" evidence="2">
    <location>
        <begin position="83"/>
        <end position="129"/>
    </location>
</feature>
<feature type="region of interest" description="Disordered" evidence="2">
    <location>
        <begin position="203"/>
        <end position="262"/>
    </location>
</feature>
<feature type="region of interest" description="Sigma-70 factor domain-2" evidence="1">
    <location>
        <begin position="450"/>
        <end position="520"/>
    </location>
</feature>
<feature type="region of interest" description="Sigma-70 factor domain-3" evidence="1">
    <location>
        <begin position="529"/>
        <end position="605"/>
    </location>
</feature>
<feature type="region of interest" description="Sigma-70 factor domain-4" evidence="1">
    <location>
        <begin position="618"/>
        <end position="671"/>
    </location>
</feature>
<feature type="short sequence motif" description="Interaction with polymerase core subunit RpoC">
    <location>
        <begin position="474"/>
        <end position="477"/>
    </location>
</feature>
<feature type="compositionally biased region" description="Basic and acidic residues" evidence="2">
    <location>
        <begin position="1"/>
        <end position="18"/>
    </location>
</feature>
<feature type="compositionally biased region" description="Acidic residues" evidence="2">
    <location>
        <begin position="83"/>
        <end position="102"/>
    </location>
</feature>
<feature type="compositionally biased region" description="Basic and acidic residues" evidence="2">
    <location>
        <begin position="117"/>
        <end position="129"/>
    </location>
</feature>
<feature type="compositionally biased region" description="Basic and acidic residues" evidence="2">
    <location>
        <begin position="214"/>
        <end position="228"/>
    </location>
</feature>
<feature type="compositionally biased region" description="Acidic residues" evidence="2">
    <location>
        <begin position="250"/>
        <end position="261"/>
    </location>
</feature>
<feature type="sequence conflict" description="In Ref. 1; CAA49185." evidence="3" ref="1">
    <original>E</original>
    <variation>Q</variation>
    <location>
        <position position="147"/>
    </location>
</feature>
<feature type="sequence conflict" description="In Ref. 1; CAA49185." evidence="3" ref="1">
    <original>L</original>
    <variation>V</variation>
    <location>
        <position position="189"/>
    </location>
</feature>
<feature type="sequence conflict" description="In Ref. 1; CAA49185." evidence="3" ref="1">
    <original>A</original>
    <variation>G</variation>
    <location>
        <position position="234"/>
    </location>
</feature>
<feature type="sequence conflict" description="In Ref. 1; CAA49185." evidence="3" ref="1">
    <original>KL</original>
    <variation>NV</variation>
    <location>
        <begin position="289"/>
        <end position="290"/>
    </location>
</feature>
<feature type="sequence conflict" description="In Ref. 1; CAA49185." evidence="3" ref="1">
    <original>AN</original>
    <variation>GF</variation>
    <location>
        <begin position="609"/>
        <end position="610"/>
    </location>
</feature>
<feature type="sequence conflict" description="In Ref. 1; CAA49185." evidence="3" ref="1">
    <original>R</original>
    <variation>S</variation>
    <location>
        <position position="625"/>
    </location>
</feature>
<feature type="sequence conflict" description="In Ref. 1; CAA49185." evidence="3" ref="1">
    <original>R</original>
    <variation>P</variation>
    <location>
        <position position="633"/>
    </location>
</feature>
<feature type="sequence conflict" description="In Ref. 1; CAA49185." evidence="3" ref="1">
    <original>KL</original>
    <variation>NV</variation>
    <location>
        <begin position="668"/>
        <end position="669"/>
    </location>
</feature>
<feature type="sequence conflict" description="In Ref. 1; CAA49185." evidence="3" ref="1">
    <original>S</original>
    <variation>T</variation>
    <location>
        <position position="680"/>
    </location>
</feature>
<proteinExistence type="inferred from homology"/>